<organism>
    <name type="scientific">Dictyostelium discoideum</name>
    <name type="common">Social amoeba</name>
    <dbReference type="NCBI Taxonomy" id="44689"/>
    <lineage>
        <taxon>Eukaryota</taxon>
        <taxon>Amoebozoa</taxon>
        <taxon>Evosea</taxon>
        <taxon>Eumycetozoa</taxon>
        <taxon>Dictyostelia</taxon>
        <taxon>Dictyosteliales</taxon>
        <taxon>Dictyosteliaceae</taxon>
        <taxon>Dictyostelium</taxon>
    </lineage>
</organism>
<evidence type="ECO:0000255" key="1"/>
<evidence type="ECO:0000305" key="2"/>
<name>Y7431_DICDI</name>
<proteinExistence type="predicted"/>
<reference key="1">
    <citation type="journal article" date="2005" name="Nature">
        <title>The genome of the social amoeba Dictyostelium discoideum.</title>
        <authorList>
            <person name="Eichinger L."/>
            <person name="Pachebat J.A."/>
            <person name="Gloeckner G."/>
            <person name="Rajandream M.A."/>
            <person name="Sucgang R."/>
            <person name="Berriman M."/>
            <person name="Song J."/>
            <person name="Olsen R."/>
            <person name="Szafranski K."/>
            <person name="Xu Q."/>
            <person name="Tunggal B."/>
            <person name="Kummerfeld S."/>
            <person name="Madera M."/>
            <person name="Konfortov B.A."/>
            <person name="Rivero F."/>
            <person name="Bankier A.T."/>
            <person name="Lehmann R."/>
            <person name="Hamlin N."/>
            <person name="Davies R."/>
            <person name="Gaudet P."/>
            <person name="Fey P."/>
            <person name="Pilcher K."/>
            <person name="Chen G."/>
            <person name="Saunders D."/>
            <person name="Sodergren E.J."/>
            <person name="Davis P."/>
            <person name="Kerhornou A."/>
            <person name="Nie X."/>
            <person name="Hall N."/>
            <person name="Anjard C."/>
            <person name="Hemphill L."/>
            <person name="Bason N."/>
            <person name="Farbrother P."/>
            <person name="Desany B."/>
            <person name="Just E."/>
            <person name="Morio T."/>
            <person name="Rost R."/>
            <person name="Churcher C.M."/>
            <person name="Cooper J."/>
            <person name="Haydock S."/>
            <person name="van Driessche N."/>
            <person name="Cronin A."/>
            <person name="Goodhead I."/>
            <person name="Muzny D.M."/>
            <person name="Mourier T."/>
            <person name="Pain A."/>
            <person name="Lu M."/>
            <person name="Harper D."/>
            <person name="Lindsay R."/>
            <person name="Hauser H."/>
            <person name="James K.D."/>
            <person name="Quiles M."/>
            <person name="Madan Babu M."/>
            <person name="Saito T."/>
            <person name="Buchrieser C."/>
            <person name="Wardroper A."/>
            <person name="Felder M."/>
            <person name="Thangavelu M."/>
            <person name="Johnson D."/>
            <person name="Knights A."/>
            <person name="Loulseged H."/>
            <person name="Mungall K.L."/>
            <person name="Oliver K."/>
            <person name="Price C."/>
            <person name="Quail M.A."/>
            <person name="Urushihara H."/>
            <person name="Hernandez J."/>
            <person name="Rabbinowitsch E."/>
            <person name="Steffen D."/>
            <person name="Sanders M."/>
            <person name="Ma J."/>
            <person name="Kohara Y."/>
            <person name="Sharp S."/>
            <person name="Simmonds M.N."/>
            <person name="Spiegler S."/>
            <person name="Tivey A."/>
            <person name="Sugano S."/>
            <person name="White B."/>
            <person name="Walker D."/>
            <person name="Woodward J.R."/>
            <person name="Winckler T."/>
            <person name="Tanaka Y."/>
            <person name="Shaulsky G."/>
            <person name="Schleicher M."/>
            <person name="Weinstock G.M."/>
            <person name="Rosenthal A."/>
            <person name="Cox E.C."/>
            <person name="Chisholm R.L."/>
            <person name="Gibbs R.A."/>
            <person name="Loomis W.F."/>
            <person name="Platzer M."/>
            <person name="Kay R.R."/>
            <person name="Williams J.G."/>
            <person name="Dear P.H."/>
            <person name="Noegel A.A."/>
            <person name="Barrell B.G."/>
            <person name="Kuspa A."/>
        </authorList>
    </citation>
    <scope>NUCLEOTIDE SEQUENCE [LARGE SCALE GENOMIC DNA]</scope>
    <source>
        <strain>AX4</strain>
    </source>
</reference>
<gene>
    <name type="ORF">DDB_G0287341</name>
</gene>
<comment type="subcellular location">
    <subcellularLocation>
        <location evidence="2">Membrane</location>
        <topology evidence="2">Multi-pass membrane protein</topology>
    </subcellularLocation>
</comment>
<protein>
    <recommendedName>
        <fullName>Uncharacterized transmembrane protein DDB_G0287341</fullName>
    </recommendedName>
</protein>
<sequence>MNSLKFKLTFYTLFGLIWSLLVFFFLSPWYEETLKKDIFELKQYKFSNFLILYDKIEYNKFDYVDGAETYFRDAFGFETKTLEGIMTSIKVLSTLAFLSTTFLIYFTIIFYVHIKFIFDTENHRRLGKKVWCYVLIGSPLVSFFLSFITLFLIIGIPSAVRNDCYKEYGKKFCNSQLRYHTSFIGENQVWLWGPSRGWIILMVDTILTFFATIYCWRNAHKFDEVKMKKKKKNYLNNNNNKNNIL</sequence>
<accession>Q54KH5</accession>
<dbReference type="EMBL" id="AAFI02000100">
    <property type="protein sequence ID" value="EAL63738.1"/>
    <property type="molecule type" value="Genomic_DNA"/>
</dbReference>
<dbReference type="RefSeq" id="XP_637248.1">
    <property type="nucleotide sequence ID" value="XM_632156.1"/>
</dbReference>
<dbReference type="FunCoup" id="Q54KH5">
    <property type="interactions" value="877"/>
</dbReference>
<dbReference type="PaxDb" id="44689-DDB0187431"/>
<dbReference type="EnsemblProtists" id="EAL63738">
    <property type="protein sequence ID" value="EAL63738"/>
    <property type="gene ID" value="DDB_G0287341"/>
</dbReference>
<dbReference type="GeneID" id="8626079"/>
<dbReference type="KEGG" id="ddi:DDB_G0287341"/>
<dbReference type="dictyBase" id="DDB_G0287341"/>
<dbReference type="VEuPathDB" id="AmoebaDB:DDB_G0287341"/>
<dbReference type="eggNOG" id="ENOG502RI46">
    <property type="taxonomic scope" value="Eukaryota"/>
</dbReference>
<dbReference type="HOGENOM" id="CLU_1135265_0_0_1"/>
<dbReference type="InParanoid" id="Q54KH5"/>
<dbReference type="OMA" id="DTENHRR"/>
<dbReference type="PRO" id="PR:Q54KH5"/>
<dbReference type="Proteomes" id="UP000002195">
    <property type="component" value="Chromosome 5"/>
</dbReference>
<dbReference type="GO" id="GO:0016020">
    <property type="term" value="C:membrane"/>
    <property type="evidence" value="ECO:0007669"/>
    <property type="project" value="UniProtKB-SubCell"/>
</dbReference>
<dbReference type="InterPro" id="IPR040291">
    <property type="entry name" value="DDB_G0287341-like"/>
</dbReference>
<dbReference type="PANTHER" id="PTHR35202:SF1">
    <property type="entry name" value="TRANSMEMBRANE PROTEIN"/>
    <property type="match status" value="1"/>
</dbReference>
<dbReference type="PANTHER" id="PTHR35202">
    <property type="entry name" value="TRANSMEMBRANE PROTEIN-RELATED"/>
    <property type="match status" value="1"/>
</dbReference>
<keyword id="KW-0472">Membrane</keyword>
<keyword id="KW-1185">Reference proteome</keyword>
<keyword id="KW-0812">Transmembrane</keyword>
<keyword id="KW-1133">Transmembrane helix</keyword>
<feature type="chain" id="PRO_0000347030" description="Uncharacterized transmembrane protein DDB_G0287341">
    <location>
        <begin position="1"/>
        <end position="245"/>
    </location>
</feature>
<feature type="transmembrane region" description="Helical" evidence="1">
    <location>
        <begin position="10"/>
        <end position="30"/>
    </location>
</feature>
<feature type="transmembrane region" description="Helical" evidence="1">
    <location>
        <begin position="94"/>
        <end position="114"/>
    </location>
</feature>
<feature type="transmembrane region" description="Helical" evidence="1">
    <location>
        <begin position="134"/>
        <end position="154"/>
    </location>
</feature>
<feature type="transmembrane region" description="Helical" evidence="1">
    <location>
        <begin position="196"/>
        <end position="216"/>
    </location>
</feature>